<name>RS9_ECO7I</name>
<protein>
    <recommendedName>
        <fullName evidence="1">Small ribosomal subunit protein uS9</fullName>
    </recommendedName>
    <alternativeName>
        <fullName evidence="2">30S ribosomal protein S9</fullName>
    </alternativeName>
</protein>
<organism>
    <name type="scientific">Escherichia coli O7:K1 (strain IAI39 / ExPEC)</name>
    <dbReference type="NCBI Taxonomy" id="585057"/>
    <lineage>
        <taxon>Bacteria</taxon>
        <taxon>Pseudomonadati</taxon>
        <taxon>Pseudomonadota</taxon>
        <taxon>Gammaproteobacteria</taxon>
        <taxon>Enterobacterales</taxon>
        <taxon>Enterobacteriaceae</taxon>
        <taxon>Escherichia</taxon>
    </lineage>
</organism>
<accession>B7NKU2</accession>
<dbReference type="EMBL" id="CU928164">
    <property type="protein sequence ID" value="CAR19836.1"/>
    <property type="molecule type" value="Genomic_DNA"/>
</dbReference>
<dbReference type="RefSeq" id="WP_000829818.1">
    <property type="nucleotide sequence ID" value="NC_011750.1"/>
</dbReference>
<dbReference type="RefSeq" id="YP_002409623.1">
    <property type="nucleotide sequence ID" value="NC_011750.1"/>
</dbReference>
<dbReference type="SMR" id="B7NKU2"/>
<dbReference type="STRING" id="585057.ECIAI39_3720"/>
<dbReference type="GeneID" id="98390344"/>
<dbReference type="KEGG" id="ect:ECIAI39_3720"/>
<dbReference type="PATRIC" id="fig|585057.6.peg.3856"/>
<dbReference type="HOGENOM" id="CLU_046483_2_1_6"/>
<dbReference type="PRO" id="PR:B7NKU2"/>
<dbReference type="Proteomes" id="UP000000749">
    <property type="component" value="Chromosome"/>
</dbReference>
<dbReference type="GO" id="GO:0022627">
    <property type="term" value="C:cytosolic small ribosomal subunit"/>
    <property type="evidence" value="ECO:0007669"/>
    <property type="project" value="TreeGrafter"/>
</dbReference>
<dbReference type="GO" id="GO:0003723">
    <property type="term" value="F:RNA binding"/>
    <property type="evidence" value="ECO:0007669"/>
    <property type="project" value="TreeGrafter"/>
</dbReference>
<dbReference type="GO" id="GO:0003735">
    <property type="term" value="F:structural constituent of ribosome"/>
    <property type="evidence" value="ECO:0007669"/>
    <property type="project" value="InterPro"/>
</dbReference>
<dbReference type="GO" id="GO:0006412">
    <property type="term" value="P:translation"/>
    <property type="evidence" value="ECO:0007669"/>
    <property type="project" value="UniProtKB-UniRule"/>
</dbReference>
<dbReference type="FunFam" id="3.30.230.10:FF:000001">
    <property type="entry name" value="30S ribosomal protein S9"/>
    <property type="match status" value="1"/>
</dbReference>
<dbReference type="Gene3D" id="3.30.230.10">
    <property type="match status" value="1"/>
</dbReference>
<dbReference type="HAMAP" id="MF_00532_B">
    <property type="entry name" value="Ribosomal_uS9_B"/>
    <property type="match status" value="1"/>
</dbReference>
<dbReference type="InterPro" id="IPR020568">
    <property type="entry name" value="Ribosomal_Su5_D2-typ_SF"/>
</dbReference>
<dbReference type="InterPro" id="IPR000754">
    <property type="entry name" value="Ribosomal_uS9"/>
</dbReference>
<dbReference type="InterPro" id="IPR023035">
    <property type="entry name" value="Ribosomal_uS9_bac/plastid"/>
</dbReference>
<dbReference type="InterPro" id="IPR020574">
    <property type="entry name" value="Ribosomal_uS9_CS"/>
</dbReference>
<dbReference type="InterPro" id="IPR014721">
    <property type="entry name" value="Ribsml_uS5_D2-typ_fold_subgr"/>
</dbReference>
<dbReference type="NCBIfam" id="NF001099">
    <property type="entry name" value="PRK00132.1"/>
    <property type="match status" value="1"/>
</dbReference>
<dbReference type="PANTHER" id="PTHR21569">
    <property type="entry name" value="RIBOSOMAL PROTEIN S9"/>
    <property type="match status" value="1"/>
</dbReference>
<dbReference type="PANTHER" id="PTHR21569:SF1">
    <property type="entry name" value="SMALL RIBOSOMAL SUBUNIT PROTEIN US9M"/>
    <property type="match status" value="1"/>
</dbReference>
<dbReference type="Pfam" id="PF00380">
    <property type="entry name" value="Ribosomal_S9"/>
    <property type="match status" value="1"/>
</dbReference>
<dbReference type="SUPFAM" id="SSF54211">
    <property type="entry name" value="Ribosomal protein S5 domain 2-like"/>
    <property type="match status" value="1"/>
</dbReference>
<dbReference type="PROSITE" id="PS00360">
    <property type="entry name" value="RIBOSOMAL_S9"/>
    <property type="match status" value="1"/>
</dbReference>
<reference key="1">
    <citation type="journal article" date="2009" name="PLoS Genet.">
        <title>Organised genome dynamics in the Escherichia coli species results in highly diverse adaptive paths.</title>
        <authorList>
            <person name="Touchon M."/>
            <person name="Hoede C."/>
            <person name="Tenaillon O."/>
            <person name="Barbe V."/>
            <person name="Baeriswyl S."/>
            <person name="Bidet P."/>
            <person name="Bingen E."/>
            <person name="Bonacorsi S."/>
            <person name="Bouchier C."/>
            <person name="Bouvet O."/>
            <person name="Calteau A."/>
            <person name="Chiapello H."/>
            <person name="Clermont O."/>
            <person name="Cruveiller S."/>
            <person name="Danchin A."/>
            <person name="Diard M."/>
            <person name="Dossat C."/>
            <person name="Karoui M.E."/>
            <person name="Frapy E."/>
            <person name="Garry L."/>
            <person name="Ghigo J.M."/>
            <person name="Gilles A.M."/>
            <person name="Johnson J."/>
            <person name="Le Bouguenec C."/>
            <person name="Lescat M."/>
            <person name="Mangenot S."/>
            <person name="Martinez-Jehanne V."/>
            <person name="Matic I."/>
            <person name="Nassif X."/>
            <person name="Oztas S."/>
            <person name="Petit M.A."/>
            <person name="Pichon C."/>
            <person name="Rouy Z."/>
            <person name="Ruf C.S."/>
            <person name="Schneider D."/>
            <person name="Tourret J."/>
            <person name="Vacherie B."/>
            <person name="Vallenet D."/>
            <person name="Medigue C."/>
            <person name="Rocha E.P.C."/>
            <person name="Denamur E."/>
        </authorList>
    </citation>
    <scope>NUCLEOTIDE SEQUENCE [LARGE SCALE GENOMIC DNA]</scope>
    <source>
        <strain>IAI39 / ExPEC</strain>
    </source>
</reference>
<sequence>MAENQYYGTGRRKSSAARVFIKPGNGKIVINQRSLEQYFGRETARMVVRQPLELVDMVEKLDLYITVKGGGISGQAGAIRHGITRALMEYDESLRSELRKAGFVTRDARQVERKKVGLRKARRRPQFSKR</sequence>
<proteinExistence type="inferred from homology"/>
<comment type="similarity">
    <text evidence="1">Belongs to the universal ribosomal protein uS9 family.</text>
</comment>
<evidence type="ECO:0000255" key="1">
    <source>
        <dbReference type="HAMAP-Rule" id="MF_00532"/>
    </source>
</evidence>
<evidence type="ECO:0000305" key="2"/>
<gene>
    <name evidence="1" type="primary">rpsI</name>
    <name type="ordered locus">ECIAI39_3720</name>
</gene>
<feature type="chain" id="PRO_1000128118" description="Small ribosomal subunit protein uS9">
    <location>
        <begin position="1"/>
        <end position="130"/>
    </location>
</feature>
<keyword id="KW-0687">Ribonucleoprotein</keyword>
<keyword id="KW-0689">Ribosomal protein</keyword>